<name>HP1B3_HUMAN</name>
<feature type="initiator methionine" description="Removed" evidence="15">
    <location>
        <position position="1"/>
    </location>
</feature>
<feature type="chain" id="PRO_0000339642" description="Heterochromatin protein 1-binding protein 3">
    <location>
        <begin position="2"/>
        <end position="553"/>
    </location>
</feature>
<feature type="domain" description="H15 1" evidence="3">
    <location>
        <begin position="157"/>
        <end position="232"/>
    </location>
</feature>
<feature type="domain" description="H15 2" evidence="3">
    <location>
        <begin position="255"/>
        <end position="330"/>
    </location>
</feature>
<feature type="domain" description="H15 3" evidence="3">
    <location>
        <begin position="337"/>
        <end position="413"/>
    </location>
</feature>
<feature type="region of interest" description="Disordered" evidence="4">
    <location>
        <begin position="29"/>
        <end position="134"/>
    </location>
</feature>
<feature type="region of interest" description="Disordered" evidence="4">
    <location>
        <begin position="140"/>
        <end position="159"/>
    </location>
</feature>
<feature type="region of interest" description="Disordered" evidence="4">
    <location>
        <begin position="230"/>
        <end position="255"/>
    </location>
</feature>
<feature type="region of interest" description="Disordered" evidence="4">
    <location>
        <begin position="422"/>
        <end position="553"/>
    </location>
</feature>
<feature type="short sequence motif" description="PxVxL motif" evidence="11">
    <location>
        <begin position="255"/>
        <end position="259"/>
    </location>
</feature>
<feature type="compositionally biased region" description="Acidic residues" evidence="4">
    <location>
        <begin position="60"/>
        <end position="71"/>
    </location>
</feature>
<feature type="compositionally biased region" description="Basic and acidic residues" evidence="4">
    <location>
        <begin position="94"/>
        <end position="127"/>
    </location>
</feature>
<feature type="compositionally biased region" description="Polar residues" evidence="4">
    <location>
        <begin position="140"/>
        <end position="154"/>
    </location>
</feature>
<feature type="compositionally biased region" description="Basic residues" evidence="4">
    <location>
        <begin position="233"/>
        <end position="247"/>
    </location>
</feature>
<feature type="compositionally biased region" description="Acidic residues" evidence="4">
    <location>
        <begin position="430"/>
        <end position="450"/>
    </location>
</feature>
<feature type="compositionally biased region" description="Basic residues" evidence="4">
    <location>
        <begin position="489"/>
        <end position="510"/>
    </location>
</feature>
<feature type="compositionally biased region" description="Low complexity" evidence="4">
    <location>
        <begin position="517"/>
        <end position="527"/>
    </location>
</feature>
<feature type="compositionally biased region" description="Basic residues" evidence="4">
    <location>
        <begin position="543"/>
        <end position="553"/>
    </location>
</feature>
<feature type="modified residue" description="N-acetylalanine" evidence="15">
    <location>
        <position position="2"/>
    </location>
</feature>
<feature type="modified residue" description="Phosphoserine" evidence="15 17">
    <location>
        <position position="6"/>
    </location>
</feature>
<feature type="modified residue" description="Phosphothreonine" evidence="17">
    <location>
        <position position="51"/>
    </location>
</feature>
<feature type="modified residue" description="Phosphothreonine" evidence="2">
    <location>
        <position position="85"/>
    </location>
</feature>
<feature type="modified residue" description="Phosphoserine" evidence="13 15">
    <location>
        <position position="142"/>
    </location>
</feature>
<feature type="modified residue" description="Phosphoserine" evidence="15 17">
    <location>
        <position position="155"/>
    </location>
</feature>
<feature type="modified residue" description="Phosphoserine" evidence="15">
    <location>
        <position position="156"/>
    </location>
</feature>
<feature type="modified residue" description="N6-acetyllysine" evidence="1">
    <location>
        <position position="190"/>
    </location>
</feature>
<feature type="modified residue" description="Phosphoserine" evidence="14 15">
    <location>
        <position position="248"/>
    </location>
</feature>
<feature type="modified residue" description="Phosphoserine" evidence="14 15 17">
    <location>
        <position position="249"/>
    </location>
</feature>
<feature type="modified residue" description="Phosphoserine" evidence="16">
    <location>
        <position position="441"/>
    </location>
</feature>
<feature type="modified residue" description="Phosphoserine" evidence="16">
    <location>
        <position position="442"/>
    </location>
</feature>
<feature type="modified residue" description="Phosphoserine" evidence="16">
    <location>
        <position position="446"/>
    </location>
</feature>
<feature type="cross-link" description="Glycyl lysine isopeptide (Lys-Gly) (interchain with G-Cter in SUMO2)" evidence="18">
    <location>
        <position position="64"/>
    </location>
</feature>
<feature type="cross-link" description="Glycyl lysine isopeptide (Lys-Gly) (interchain with G-Cter in SUMO2)" evidence="18">
    <location>
        <position position="97"/>
    </location>
</feature>
<feature type="cross-link" description="Glycyl lysine isopeptide (Lys-Gly) (interchain with G-Cter in SUMO2)" evidence="18">
    <location>
        <position position="258"/>
    </location>
</feature>
<feature type="splice variant" id="VSP_034168" description="In isoform 3." evidence="9 10">
    <location>
        <begin position="1"/>
        <end position="152"/>
    </location>
</feature>
<feature type="splice variant" id="VSP_034169" description="In isoform 2." evidence="8">
    <location>
        <begin position="1"/>
        <end position="38"/>
    </location>
</feature>
<feature type="splice variant" id="VSP_034170" description="In isoform 4." evidence="9">
    <original>DEKDQSKEKEKKVKKTI</original>
    <variation>ERADSIHSTLFIIGQNS</variation>
    <location>
        <begin position="117"/>
        <end position="133"/>
    </location>
</feature>
<feature type="splice variant" id="VSP_034171" description="In isoform 4." evidence="9">
    <location>
        <begin position="134"/>
        <end position="553"/>
    </location>
</feature>
<feature type="sequence conflict" description="In Ref. 1; AAF14871." evidence="12" ref="1">
    <original>V</original>
    <variation>G</variation>
    <location>
        <position position="262"/>
    </location>
</feature>
<feature type="sequence conflict" description="In Ref. 2; BAF83941." evidence="12" ref="2">
    <original>F</original>
    <variation>S</variation>
    <location>
        <position position="267"/>
    </location>
</feature>
<feature type="sequence conflict" description="In Ref. 2; BAG64972." evidence="12" ref="2">
    <original>P</original>
    <variation>S</variation>
    <location>
        <position position="499"/>
    </location>
</feature>
<feature type="helix" evidence="19">
    <location>
        <begin position="161"/>
        <end position="175"/>
    </location>
</feature>
<feature type="helix" evidence="19">
    <location>
        <begin position="180"/>
        <end position="190"/>
    </location>
</feature>
<feature type="helix" evidence="19">
    <location>
        <begin position="194"/>
        <end position="197"/>
    </location>
</feature>
<feature type="turn" evidence="19">
    <location>
        <begin position="198"/>
        <end position="202"/>
    </location>
</feature>
<feature type="helix" evidence="19">
    <location>
        <begin position="203"/>
        <end position="214"/>
    </location>
</feature>
<feature type="turn" evidence="19">
    <location>
        <begin position="224"/>
        <end position="226"/>
    </location>
</feature>
<feature type="turn" evidence="19">
    <location>
        <begin position="231"/>
        <end position="234"/>
    </location>
</feature>
<keyword id="KW-0002">3D-structure</keyword>
<keyword id="KW-0007">Acetylation</keyword>
<keyword id="KW-0025">Alternative splicing</keyword>
<keyword id="KW-0158">Chromosome</keyword>
<keyword id="KW-0903">Direct protein sequencing</keyword>
<keyword id="KW-0238">DNA-binding</keyword>
<keyword id="KW-1017">Isopeptide bond</keyword>
<keyword id="KW-0539">Nucleus</keyword>
<keyword id="KW-0597">Phosphoprotein</keyword>
<keyword id="KW-1267">Proteomics identification</keyword>
<keyword id="KW-1185">Reference proteome</keyword>
<keyword id="KW-0677">Repeat</keyword>
<keyword id="KW-0832">Ubl conjugation</keyword>
<dbReference type="EMBL" id="AF113534">
    <property type="protein sequence ID" value="AAF14871.1"/>
    <property type="status" value="ALT_FRAME"/>
    <property type="molecule type" value="mRNA"/>
</dbReference>
<dbReference type="EMBL" id="AK023129">
    <property type="protein sequence ID" value="BAG51160.1"/>
    <property type="molecule type" value="mRNA"/>
</dbReference>
<dbReference type="EMBL" id="AK291252">
    <property type="protein sequence ID" value="BAF83941.1"/>
    <property type="molecule type" value="mRNA"/>
</dbReference>
<dbReference type="EMBL" id="AK304065">
    <property type="protein sequence ID" value="BAG64972.1"/>
    <property type="molecule type" value="mRNA"/>
</dbReference>
<dbReference type="EMBL" id="AL833978">
    <property type="protein sequence ID" value="CAD38822.1"/>
    <property type="molecule type" value="mRNA"/>
</dbReference>
<dbReference type="EMBL" id="AL606477">
    <property type="status" value="NOT_ANNOTATED_CDS"/>
    <property type="molecule type" value="Genomic_DNA"/>
</dbReference>
<dbReference type="EMBL" id="AL663074">
    <property type="status" value="NOT_ANNOTATED_CDS"/>
    <property type="molecule type" value="Genomic_DNA"/>
</dbReference>
<dbReference type="EMBL" id="CH471134">
    <property type="protein sequence ID" value="EAW94953.1"/>
    <property type="molecule type" value="Genomic_DNA"/>
</dbReference>
<dbReference type="EMBL" id="BC032139">
    <property type="protein sequence ID" value="AAH32139.1"/>
    <property type="molecule type" value="mRNA"/>
</dbReference>
<dbReference type="EMBL" id="BC045660">
    <property type="protein sequence ID" value="AAH45660.1"/>
    <property type="molecule type" value="mRNA"/>
</dbReference>
<dbReference type="CCDS" id="CCDS30621.1">
    <molecule id="Q5SSJ5-1"/>
</dbReference>
<dbReference type="RefSeq" id="NP_001358981.1">
    <molecule id="Q5SSJ5-1"/>
    <property type="nucleotide sequence ID" value="NM_001372052.1"/>
</dbReference>
<dbReference type="RefSeq" id="NP_001363716.1">
    <molecule id="Q5SSJ5-1"/>
    <property type="nucleotide sequence ID" value="NM_001376787.1"/>
</dbReference>
<dbReference type="RefSeq" id="NP_001363717.1">
    <molecule id="Q5SSJ5-1"/>
    <property type="nucleotide sequence ID" value="NM_001376788.1"/>
</dbReference>
<dbReference type="RefSeq" id="NP_001363718.1">
    <molecule id="Q5SSJ5-1"/>
    <property type="nucleotide sequence ID" value="NM_001376789.1"/>
</dbReference>
<dbReference type="RefSeq" id="NP_001363719.1">
    <molecule id="Q5SSJ5-1"/>
    <property type="nucleotide sequence ID" value="NM_001376790.1"/>
</dbReference>
<dbReference type="RefSeq" id="NP_001363720.1">
    <molecule id="Q5SSJ5-2"/>
    <property type="nucleotide sequence ID" value="NM_001376791.1"/>
</dbReference>
<dbReference type="RefSeq" id="NP_001363721.1">
    <molecule id="Q5SSJ5-2"/>
    <property type="nucleotide sequence ID" value="NM_001376792.1"/>
</dbReference>
<dbReference type="RefSeq" id="NP_001363722.1">
    <molecule id="Q5SSJ5-2"/>
    <property type="nucleotide sequence ID" value="NM_001376793.1"/>
</dbReference>
<dbReference type="RefSeq" id="NP_001363723.1">
    <molecule id="Q5SSJ5-2"/>
    <property type="nucleotide sequence ID" value="NM_001376794.1"/>
</dbReference>
<dbReference type="RefSeq" id="NP_001386750.1">
    <molecule id="Q5SSJ5-2"/>
    <property type="nucleotide sequence ID" value="NM_001399821.1"/>
</dbReference>
<dbReference type="RefSeq" id="NP_001386752.1">
    <molecule id="Q5SSJ5-2"/>
    <property type="nucleotide sequence ID" value="NM_001399823.1"/>
</dbReference>
<dbReference type="RefSeq" id="NP_057371.2">
    <molecule id="Q5SSJ5-1"/>
    <property type="nucleotide sequence ID" value="NM_016287.5"/>
</dbReference>
<dbReference type="RefSeq" id="XP_005245932.1">
    <property type="nucleotide sequence ID" value="XM_005245875.4"/>
</dbReference>
<dbReference type="RefSeq" id="XP_005245933.1">
    <property type="nucleotide sequence ID" value="XM_005245876.3"/>
</dbReference>
<dbReference type="RefSeq" id="XP_005245934.1">
    <property type="nucleotide sequence ID" value="XM_005245877.4"/>
</dbReference>
<dbReference type="RefSeq" id="XP_005245935.1">
    <property type="nucleotide sequence ID" value="XM_005245878.4"/>
</dbReference>
<dbReference type="RefSeq" id="XP_005245936.1">
    <property type="nucleotide sequence ID" value="XM_005245879.4"/>
</dbReference>
<dbReference type="RefSeq" id="XP_011539834.1">
    <property type="nucleotide sequence ID" value="XM_011541532.1"/>
</dbReference>
<dbReference type="RefSeq" id="XP_011539835.1">
    <property type="nucleotide sequence ID" value="XM_011541533.1"/>
</dbReference>
<dbReference type="RefSeq" id="XP_011539836.1">
    <property type="nucleotide sequence ID" value="XM_011541534.2"/>
</dbReference>
<dbReference type="RefSeq" id="XP_016856882.1">
    <property type="nucleotide sequence ID" value="XM_017001393.1"/>
</dbReference>
<dbReference type="RefSeq" id="XP_016856883.1">
    <property type="nucleotide sequence ID" value="XM_017001394.1"/>
</dbReference>
<dbReference type="PDB" id="2RQP">
    <property type="method" value="NMR"/>
    <property type="chains" value="A=153-237"/>
</dbReference>
<dbReference type="PDBsum" id="2RQP"/>
<dbReference type="SMR" id="Q5SSJ5"/>
<dbReference type="BioGRID" id="119128">
    <property type="interactions" value="332"/>
</dbReference>
<dbReference type="FunCoup" id="Q5SSJ5">
    <property type="interactions" value="3365"/>
</dbReference>
<dbReference type="IntAct" id="Q5SSJ5">
    <property type="interactions" value="184"/>
</dbReference>
<dbReference type="MINT" id="Q5SSJ5"/>
<dbReference type="STRING" id="9606.ENSP00000403039"/>
<dbReference type="DrugBank" id="DB11638">
    <property type="generic name" value="Artenimol"/>
</dbReference>
<dbReference type="GlyGen" id="Q5SSJ5">
    <property type="glycosylation" value="5 sites, 1 O-linked glycan (5 sites)"/>
</dbReference>
<dbReference type="iPTMnet" id="Q5SSJ5"/>
<dbReference type="MetOSite" id="Q5SSJ5"/>
<dbReference type="PhosphoSitePlus" id="Q5SSJ5"/>
<dbReference type="SwissPalm" id="Q5SSJ5"/>
<dbReference type="BioMuta" id="HP1BP3"/>
<dbReference type="DMDM" id="74743691"/>
<dbReference type="CPTAC" id="CPTAC-82"/>
<dbReference type="CPTAC" id="CPTAC-83"/>
<dbReference type="CPTAC" id="CPTAC-925"/>
<dbReference type="jPOST" id="Q5SSJ5"/>
<dbReference type="MassIVE" id="Q5SSJ5"/>
<dbReference type="PaxDb" id="9606-ENSP00000312625"/>
<dbReference type="PeptideAtlas" id="Q5SSJ5"/>
<dbReference type="ProteomicsDB" id="63880">
    <molecule id="Q5SSJ5-1"/>
</dbReference>
<dbReference type="ProteomicsDB" id="63881">
    <molecule id="Q5SSJ5-2"/>
</dbReference>
<dbReference type="ProteomicsDB" id="63882">
    <molecule id="Q5SSJ5-3"/>
</dbReference>
<dbReference type="ProteomicsDB" id="63883">
    <molecule id="Q5SSJ5-5"/>
</dbReference>
<dbReference type="Pumba" id="Q5SSJ5"/>
<dbReference type="Antibodypedia" id="29832">
    <property type="antibodies" value="81 antibodies from 21 providers"/>
</dbReference>
<dbReference type="DNASU" id="50809"/>
<dbReference type="Ensembl" id="ENST00000312239.10">
    <molecule id="Q5SSJ5-1"/>
    <property type="protein sequence ID" value="ENSP00000312625.5"/>
    <property type="gene ID" value="ENSG00000127483.19"/>
</dbReference>
<dbReference type="Ensembl" id="ENST00000375000.5">
    <molecule id="Q5SSJ5-5"/>
    <property type="protein sequence ID" value="ENSP00000364139.1"/>
    <property type="gene ID" value="ENSG00000127483.19"/>
</dbReference>
<dbReference type="Ensembl" id="ENST00000375003.6">
    <molecule id="Q5SSJ5-3"/>
    <property type="protein sequence ID" value="ENSP00000364142.2"/>
    <property type="gene ID" value="ENSG00000127483.19"/>
</dbReference>
<dbReference type="Ensembl" id="ENST00000438032.6">
    <molecule id="Q5SSJ5-1"/>
    <property type="protein sequence ID" value="ENSP00000403039.2"/>
    <property type="gene ID" value="ENSG00000127483.19"/>
</dbReference>
<dbReference type="GeneID" id="50809"/>
<dbReference type="KEGG" id="hsa:50809"/>
<dbReference type="MANE-Select" id="ENST00000438032.6">
    <property type="protein sequence ID" value="ENSP00000403039.2"/>
    <property type="RefSeq nucleotide sequence ID" value="NM_001372052.1"/>
    <property type="RefSeq protein sequence ID" value="NP_001358981.1"/>
</dbReference>
<dbReference type="UCSC" id="uc001bdw.2">
    <molecule id="Q5SSJ5-1"/>
    <property type="organism name" value="human"/>
</dbReference>
<dbReference type="AGR" id="HGNC:24973"/>
<dbReference type="CTD" id="50809"/>
<dbReference type="DisGeNET" id="50809"/>
<dbReference type="GeneCards" id="HP1BP3"/>
<dbReference type="HGNC" id="HGNC:24973">
    <property type="gene designation" value="HP1BP3"/>
</dbReference>
<dbReference type="HPA" id="ENSG00000127483">
    <property type="expression patterns" value="Low tissue specificity"/>
</dbReference>
<dbReference type="MIM" id="616072">
    <property type="type" value="gene"/>
</dbReference>
<dbReference type="neXtProt" id="NX_Q5SSJ5"/>
<dbReference type="OpenTargets" id="ENSG00000127483"/>
<dbReference type="PharmGKB" id="PA142671673"/>
<dbReference type="VEuPathDB" id="HostDB:ENSG00000127483"/>
<dbReference type="eggNOG" id="KOG4012">
    <property type="taxonomic scope" value="Eukaryota"/>
</dbReference>
<dbReference type="GeneTree" id="ENSGT00940000155314"/>
<dbReference type="HOGENOM" id="CLU_035727_0_0_1"/>
<dbReference type="InParanoid" id="Q5SSJ5"/>
<dbReference type="OMA" id="IQNCKER"/>
<dbReference type="OrthoDB" id="7684689at2759"/>
<dbReference type="PAN-GO" id="Q5SSJ5">
    <property type="GO annotations" value="5 GO annotations based on evolutionary models"/>
</dbReference>
<dbReference type="PhylomeDB" id="Q5SSJ5"/>
<dbReference type="TreeFam" id="TF106395"/>
<dbReference type="PathwayCommons" id="Q5SSJ5"/>
<dbReference type="SignaLink" id="Q5SSJ5"/>
<dbReference type="BioGRID-ORCS" id="50809">
    <property type="hits" value="14 hits in 1170 CRISPR screens"/>
</dbReference>
<dbReference type="CD-CODE" id="91857CE7">
    <property type="entry name" value="Nucleolus"/>
</dbReference>
<dbReference type="ChiTaRS" id="HP1BP3">
    <property type="organism name" value="human"/>
</dbReference>
<dbReference type="EvolutionaryTrace" id="Q5SSJ5"/>
<dbReference type="GeneWiki" id="HP1BP3"/>
<dbReference type="GenomeRNAi" id="50809"/>
<dbReference type="Pharos" id="Q5SSJ5">
    <property type="development level" value="Tbio"/>
</dbReference>
<dbReference type="PRO" id="PR:Q5SSJ5"/>
<dbReference type="Proteomes" id="UP000005640">
    <property type="component" value="Chromosome 1"/>
</dbReference>
<dbReference type="RNAct" id="Q5SSJ5">
    <property type="molecule type" value="protein"/>
</dbReference>
<dbReference type="Bgee" id="ENSG00000127483">
    <property type="expression patterns" value="Expressed in Brodmann (1909) area 23 and 202 other cell types or tissues"/>
</dbReference>
<dbReference type="ExpressionAtlas" id="Q5SSJ5">
    <property type="expression patterns" value="baseline and differential"/>
</dbReference>
<dbReference type="GO" id="GO:0005694">
    <property type="term" value="C:chromosome"/>
    <property type="evidence" value="ECO:0000314"/>
    <property type="project" value="UniProtKB"/>
</dbReference>
<dbReference type="GO" id="GO:0016607">
    <property type="term" value="C:nuclear speck"/>
    <property type="evidence" value="ECO:0000314"/>
    <property type="project" value="HPA"/>
</dbReference>
<dbReference type="GO" id="GO:0000786">
    <property type="term" value="C:nucleosome"/>
    <property type="evidence" value="ECO:0007669"/>
    <property type="project" value="InterPro"/>
</dbReference>
<dbReference type="GO" id="GO:0005634">
    <property type="term" value="C:nucleus"/>
    <property type="evidence" value="ECO:0000314"/>
    <property type="project" value="UniProtKB"/>
</dbReference>
<dbReference type="GO" id="GO:0003677">
    <property type="term" value="F:DNA binding"/>
    <property type="evidence" value="ECO:0000314"/>
    <property type="project" value="UniProtKB"/>
</dbReference>
<dbReference type="GO" id="GO:0031491">
    <property type="term" value="F:nucleosome binding"/>
    <property type="evidence" value="ECO:0000314"/>
    <property type="project" value="UniProtKB"/>
</dbReference>
<dbReference type="GO" id="GO:0071456">
    <property type="term" value="P:cellular response to hypoxia"/>
    <property type="evidence" value="ECO:0000314"/>
    <property type="project" value="UniProtKB"/>
</dbReference>
<dbReference type="GO" id="GO:0070828">
    <property type="term" value="P:heterochromatin organization"/>
    <property type="evidence" value="ECO:0000315"/>
    <property type="project" value="UniProtKB"/>
</dbReference>
<dbReference type="GO" id="GO:0006334">
    <property type="term" value="P:nucleosome assembly"/>
    <property type="evidence" value="ECO:0007669"/>
    <property type="project" value="InterPro"/>
</dbReference>
<dbReference type="GO" id="GO:0042127">
    <property type="term" value="P:regulation of cell population proliferation"/>
    <property type="evidence" value="ECO:0000315"/>
    <property type="project" value="UniProtKB"/>
</dbReference>
<dbReference type="GO" id="GO:0006355">
    <property type="term" value="P:regulation of DNA-templated transcription"/>
    <property type="evidence" value="ECO:0000315"/>
    <property type="project" value="UniProtKB"/>
</dbReference>
<dbReference type="GO" id="GO:0097298">
    <property type="term" value="P:regulation of nucleus size"/>
    <property type="evidence" value="ECO:0000315"/>
    <property type="project" value="UniProtKB"/>
</dbReference>
<dbReference type="CDD" id="cd00073">
    <property type="entry name" value="H15"/>
    <property type="match status" value="1"/>
</dbReference>
<dbReference type="FunFam" id="1.10.10.10:FF:000228">
    <property type="entry name" value="heterochromatin protein 1-binding protein 3 isoform X1"/>
    <property type="match status" value="1"/>
</dbReference>
<dbReference type="FunFam" id="1.10.10.10:FF:000239">
    <property type="entry name" value="heterochromatin protein 1-binding protein 3 isoform X1"/>
    <property type="match status" value="1"/>
</dbReference>
<dbReference type="FunFam" id="1.10.10.10:FF:000276">
    <property type="entry name" value="heterochromatin protein 1-binding protein 3 isoform X1"/>
    <property type="match status" value="1"/>
</dbReference>
<dbReference type="Gene3D" id="1.10.10.10">
    <property type="entry name" value="Winged helix-like DNA-binding domain superfamily/Winged helix DNA-binding domain"/>
    <property type="match status" value="3"/>
</dbReference>
<dbReference type="InterPro" id="IPR005818">
    <property type="entry name" value="Histone_H1/H5_H15"/>
</dbReference>
<dbReference type="InterPro" id="IPR036388">
    <property type="entry name" value="WH-like_DNA-bd_sf"/>
</dbReference>
<dbReference type="InterPro" id="IPR036390">
    <property type="entry name" value="WH_DNA-bd_sf"/>
</dbReference>
<dbReference type="PANTHER" id="PTHR15832:SF1">
    <property type="entry name" value="HETEROCHROMATIN PROTEIN 1-BINDING PROTEIN 3"/>
    <property type="match status" value="1"/>
</dbReference>
<dbReference type="PANTHER" id="PTHR15832">
    <property type="entry name" value="SHC (SRC HOMOLOGY DOMAIN C-TERMINAL) ADAPTOR HOMOLOG"/>
    <property type="match status" value="1"/>
</dbReference>
<dbReference type="Pfam" id="PF00538">
    <property type="entry name" value="Linker_histone"/>
    <property type="match status" value="3"/>
</dbReference>
<dbReference type="SMART" id="SM00526">
    <property type="entry name" value="H15"/>
    <property type="match status" value="3"/>
</dbReference>
<dbReference type="SUPFAM" id="SSF46785">
    <property type="entry name" value="Winged helix' DNA-binding domain"/>
    <property type="match status" value="3"/>
</dbReference>
<dbReference type="PROSITE" id="PS51504">
    <property type="entry name" value="H15"/>
    <property type="match status" value="3"/>
</dbReference>
<evidence type="ECO:0000250" key="1">
    <source>
        <dbReference type="UniProtKB" id="Q3TEA8"/>
    </source>
</evidence>
<evidence type="ECO:0000250" key="2">
    <source>
        <dbReference type="UniProtKB" id="Q6P747"/>
    </source>
</evidence>
<evidence type="ECO:0000255" key="3">
    <source>
        <dbReference type="PROSITE-ProRule" id="PRU00837"/>
    </source>
</evidence>
<evidence type="ECO:0000256" key="4">
    <source>
        <dbReference type="SAM" id="MobiDB-lite"/>
    </source>
</evidence>
<evidence type="ECO:0000269" key="5">
    <source>
    </source>
</evidence>
<evidence type="ECO:0000269" key="6">
    <source>
    </source>
</evidence>
<evidence type="ECO:0000269" key="7">
    <source>
    </source>
</evidence>
<evidence type="ECO:0000303" key="8">
    <source>
    </source>
</evidence>
<evidence type="ECO:0000303" key="9">
    <source>
    </source>
</evidence>
<evidence type="ECO:0000303" key="10">
    <source>
    </source>
</evidence>
<evidence type="ECO:0000303" key="11">
    <source>
    </source>
</evidence>
<evidence type="ECO:0000305" key="12"/>
<evidence type="ECO:0007744" key="13">
    <source>
    </source>
</evidence>
<evidence type="ECO:0007744" key="14">
    <source>
    </source>
</evidence>
<evidence type="ECO:0007744" key="15">
    <source>
    </source>
</evidence>
<evidence type="ECO:0007744" key="16">
    <source>
    </source>
</evidence>
<evidence type="ECO:0007744" key="17">
    <source>
    </source>
</evidence>
<evidence type="ECO:0007744" key="18">
    <source>
    </source>
</evidence>
<evidence type="ECO:0007829" key="19">
    <source>
        <dbReference type="PDB" id="2RQP"/>
    </source>
</evidence>
<reference key="1">
    <citation type="journal article" date="2000" name="Proc. Natl. Acad. Sci. U.S.A.">
        <title>Gene expression profiling in the human hypothalamus-pituitary-adrenal axis and full-length cDNA cloning.</title>
        <authorList>
            <person name="Hu R.-M."/>
            <person name="Han Z.-G."/>
            <person name="Song H.-D."/>
            <person name="Peng Y.-D."/>
            <person name="Huang Q.-H."/>
            <person name="Ren S.-X."/>
            <person name="Gu Y.-J."/>
            <person name="Huang C.-H."/>
            <person name="Li Y.-B."/>
            <person name="Jiang C.-L."/>
            <person name="Fu G."/>
            <person name="Zhang Q.-H."/>
            <person name="Gu B.-W."/>
            <person name="Dai M."/>
            <person name="Mao Y.-F."/>
            <person name="Gao G.-F."/>
            <person name="Rong R."/>
            <person name="Ye M."/>
            <person name="Zhou J."/>
            <person name="Xu S.-H."/>
            <person name="Gu J."/>
            <person name="Shi J.-X."/>
            <person name="Jin W.-R."/>
            <person name="Zhang C.-K."/>
            <person name="Wu T.-M."/>
            <person name="Huang G.-Y."/>
            <person name="Chen Z."/>
            <person name="Chen M.-D."/>
            <person name="Chen J.-L."/>
        </authorList>
    </citation>
    <scope>NUCLEOTIDE SEQUENCE [LARGE SCALE MRNA] (ISOFORM 1)</scope>
    <source>
        <tissue>Hypothalamus</tissue>
    </source>
</reference>
<reference key="2">
    <citation type="journal article" date="2004" name="Nat. Genet.">
        <title>Complete sequencing and characterization of 21,243 full-length human cDNAs.</title>
        <authorList>
            <person name="Ota T."/>
            <person name="Suzuki Y."/>
            <person name="Nishikawa T."/>
            <person name="Otsuki T."/>
            <person name="Sugiyama T."/>
            <person name="Irie R."/>
            <person name="Wakamatsu A."/>
            <person name="Hayashi K."/>
            <person name="Sato H."/>
            <person name="Nagai K."/>
            <person name="Kimura K."/>
            <person name="Makita H."/>
            <person name="Sekine M."/>
            <person name="Obayashi M."/>
            <person name="Nishi T."/>
            <person name="Shibahara T."/>
            <person name="Tanaka T."/>
            <person name="Ishii S."/>
            <person name="Yamamoto J."/>
            <person name="Saito K."/>
            <person name="Kawai Y."/>
            <person name="Isono Y."/>
            <person name="Nakamura Y."/>
            <person name="Nagahari K."/>
            <person name="Murakami K."/>
            <person name="Yasuda T."/>
            <person name="Iwayanagi T."/>
            <person name="Wagatsuma M."/>
            <person name="Shiratori A."/>
            <person name="Sudo H."/>
            <person name="Hosoiri T."/>
            <person name="Kaku Y."/>
            <person name="Kodaira H."/>
            <person name="Kondo H."/>
            <person name="Sugawara M."/>
            <person name="Takahashi M."/>
            <person name="Kanda K."/>
            <person name="Yokoi T."/>
            <person name="Furuya T."/>
            <person name="Kikkawa E."/>
            <person name="Omura Y."/>
            <person name="Abe K."/>
            <person name="Kamihara K."/>
            <person name="Katsuta N."/>
            <person name="Sato K."/>
            <person name="Tanikawa M."/>
            <person name="Yamazaki M."/>
            <person name="Ninomiya K."/>
            <person name="Ishibashi T."/>
            <person name="Yamashita H."/>
            <person name="Murakawa K."/>
            <person name="Fujimori K."/>
            <person name="Tanai H."/>
            <person name="Kimata M."/>
            <person name="Watanabe M."/>
            <person name="Hiraoka S."/>
            <person name="Chiba Y."/>
            <person name="Ishida S."/>
            <person name="Ono Y."/>
            <person name="Takiguchi S."/>
            <person name="Watanabe S."/>
            <person name="Yosida M."/>
            <person name="Hotuta T."/>
            <person name="Kusano J."/>
            <person name="Kanehori K."/>
            <person name="Takahashi-Fujii A."/>
            <person name="Hara H."/>
            <person name="Tanase T.-O."/>
            <person name="Nomura Y."/>
            <person name="Togiya S."/>
            <person name="Komai F."/>
            <person name="Hara R."/>
            <person name="Takeuchi K."/>
            <person name="Arita M."/>
            <person name="Imose N."/>
            <person name="Musashino K."/>
            <person name="Yuuki H."/>
            <person name="Oshima A."/>
            <person name="Sasaki N."/>
            <person name="Aotsuka S."/>
            <person name="Yoshikawa Y."/>
            <person name="Matsunawa H."/>
            <person name="Ichihara T."/>
            <person name="Shiohata N."/>
            <person name="Sano S."/>
            <person name="Moriya S."/>
            <person name="Momiyama H."/>
            <person name="Satoh N."/>
            <person name="Takami S."/>
            <person name="Terashima Y."/>
            <person name="Suzuki O."/>
            <person name="Nakagawa S."/>
            <person name="Senoh A."/>
            <person name="Mizoguchi H."/>
            <person name="Goto Y."/>
            <person name="Shimizu F."/>
            <person name="Wakebe H."/>
            <person name="Hishigaki H."/>
            <person name="Watanabe T."/>
            <person name="Sugiyama A."/>
            <person name="Takemoto M."/>
            <person name="Kawakami B."/>
            <person name="Yamazaki M."/>
            <person name="Watanabe K."/>
            <person name="Kumagai A."/>
            <person name="Itakura S."/>
            <person name="Fukuzumi Y."/>
            <person name="Fujimori Y."/>
            <person name="Komiyama M."/>
            <person name="Tashiro H."/>
            <person name="Tanigami A."/>
            <person name="Fujiwara T."/>
            <person name="Ono T."/>
            <person name="Yamada K."/>
            <person name="Fujii Y."/>
            <person name="Ozaki K."/>
            <person name="Hirao M."/>
            <person name="Ohmori Y."/>
            <person name="Kawabata A."/>
            <person name="Hikiji T."/>
            <person name="Kobatake N."/>
            <person name="Inagaki H."/>
            <person name="Ikema Y."/>
            <person name="Okamoto S."/>
            <person name="Okitani R."/>
            <person name="Kawakami T."/>
            <person name="Noguchi S."/>
            <person name="Itoh T."/>
            <person name="Shigeta K."/>
            <person name="Senba T."/>
            <person name="Matsumura K."/>
            <person name="Nakajima Y."/>
            <person name="Mizuno T."/>
            <person name="Morinaga M."/>
            <person name="Sasaki M."/>
            <person name="Togashi T."/>
            <person name="Oyama M."/>
            <person name="Hata H."/>
            <person name="Watanabe M."/>
            <person name="Komatsu T."/>
            <person name="Mizushima-Sugano J."/>
            <person name="Satoh T."/>
            <person name="Shirai Y."/>
            <person name="Takahashi Y."/>
            <person name="Nakagawa K."/>
            <person name="Okumura K."/>
            <person name="Nagase T."/>
            <person name="Nomura N."/>
            <person name="Kikuchi H."/>
            <person name="Masuho Y."/>
            <person name="Yamashita R."/>
            <person name="Nakai K."/>
            <person name="Yada T."/>
            <person name="Nakamura Y."/>
            <person name="Ohara O."/>
            <person name="Isogai T."/>
            <person name="Sugano S."/>
        </authorList>
    </citation>
    <scope>NUCLEOTIDE SEQUENCE [LARGE SCALE MRNA] (ISOFORMS 1 AND 2)</scope>
    <source>
        <tissue>Teratocarcinoma</tissue>
        <tissue>Trachea</tissue>
    </source>
</reference>
<reference key="3">
    <citation type="journal article" date="2007" name="BMC Genomics">
        <title>The full-ORF clone resource of the German cDNA consortium.</title>
        <authorList>
            <person name="Bechtel S."/>
            <person name="Rosenfelder H."/>
            <person name="Duda A."/>
            <person name="Schmidt C.P."/>
            <person name="Ernst U."/>
            <person name="Wellenreuther R."/>
            <person name="Mehrle A."/>
            <person name="Schuster C."/>
            <person name="Bahr A."/>
            <person name="Bloecker H."/>
            <person name="Heubner D."/>
            <person name="Hoerlein A."/>
            <person name="Michel G."/>
            <person name="Wedler H."/>
            <person name="Koehrer K."/>
            <person name="Ottenwaelder B."/>
            <person name="Poustka A."/>
            <person name="Wiemann S."/>
            <person name="Schupp I."/>
        </authorList>
    </citation>
    <scope>NUCLEOTIDE SEQUENCE [LARGE SCALE MRNA] (ISOFORM 3)</scope>
    <source>
        <tissue>Testis</tissue>
    </source>
</reference>
<reference key="4">
    <citation type="journal article" date="2006" name="Nature">
        <title>The DNA sequence and biological annotation of human chromosome 1.</title>
        <authorList>
            <person name="Gregory S.G."/>
            <person name="Barlow K.F."/>
            <person name="McLay K.E."/>
            <person name="Kaul R."/>
            <person name="Swarbreck D."/>
            <person name="Dunham A."/>
            <person name="Scott C.E."/>
            <person name="Howe K.L."/>
            <person name="Woodfine K."/>
            <person name="Spencer C.C.A."/>
            <person name="Jones M.C."/>
            <person name="Gillson C."/>
            <person name="Searle S."/>
            <person name="Zhou Y."/>
            <person name="Kokocinski F."/>
            <person name="McDonald L."/>
            <person name="Evans R."/>
            <person name="Phillips K."/>
            <person name="Atkinson A."/>
            <person name="Cooper R."/>
            <person name="Jones C."/>
            <person name="Hall R.E."/>
            <person name="Andrews T.D."/>
            <person name="Lloyd C."/>
            <person name="Ainscough R."/>
            <person name="Almeida J.P."/>
            <person name="Ambrose K.D."/>
            <person name="Anderson F."/>
            <person name="Andrew R.W."/>
            <person name="Ashwell R.I.S."/>
            <person name="Aubin K."/>
            <person name="Babbage A.K."/>
            <person name="Bagguley C.L."/>
            <person name="Bailey J."/>
            <person name="Beasley H."/>
            <person name="Bethel G."/>
            <person name="Bird C.P."/>
            <person name="Bray-Allen S."/>
            <person name="Brown J.Y."/>
            <person name="Brown A.J."/>
            <person name="Buckley D."/>
            <person name="Burton J."/>
            <person name="Bye J."/>
            <person name="Carder C."/>
            <person name="Chapman J.C."/>
            <person name="Clark S.Y."/>
            <person name="Clarke G."/>
            <person name="Clee C."/>
            <person name="Cobley V."/>
            <person name="Collier R.E."/>
            <person name="Corby N."/>
            <person name="Coville G.J."/>
            <person name="Davies J."/>
            <person name="Deadman R."/>
            <person name="Dunn M."/>
            <person name="Earthrowl M."/>
            <person name="Ellington A.G."/>
            <person name="Errington H."/>
            <person name="Frankish A."/>
            <person name="Frankland J."/>
            <person name="French L."/>
            <person name="Garner P."/>
            <person name="Garnett J."/>
            <person name="Gay L."/>
            <person name="Ghori M.R.J."/>
            <person name="Gibson R."/>
            <person name="Gilby L.M."/>
            <person name="Gillett W."/>
            <person name="Glithero R.J."/>
            <person name="Grafham D.V."/>
            <person name="Griffiths C."/>
            <person name="Griffiths-Jones S."/>
            <person name="Grocock R."/>
            <person name="Hammond S."/>
            <person name="Harrison E.S.I."/>
            <person name="Hart E."/>
            <person name="Haugen E."/>
            <person name="Heath P.D."/>
            <person name="Holmes S."/>
            <person name="Holt K."/>
            <person name="Howden P.J."/>
            <person name="Hunt A.R."/>
            <person name="Hunt S.E."/>
            <person name="Hunter G."/>
            <person name="Isherwood J."/>
            <person name="James R."/>
            <person name="Johnson C."/>
            <person name="Johnson D."/>
            <person name="Joy A."/>
            <person name="Kay M."/>
            <person name="Kershaw J.K."/>
            <person name="Kibukawa M."/>
            <person name="Kimberley A.M."/>
            <person name="King A."/>
            <person name="Knights A.J."/>
            <person name="Lad H."/>
            <person name="Laird G."/>
            <person name="Lawlor S."/>
            <person name="Leongamornlert D.A."/>
            <person name="Lloyd D.M."/>
            <person name="Loveland J."/>
            <person name="Lovell J."/>
            <person name="Lush M.J."/>
            <person name="Lyne R."/>
            <person name="Martin S."/>
            <person name="Mashreghi-Mohammadi M."/>
            <person name="Matthews L."/>
            <person name="Matthews N.S.W."/>
            <person name="McLaren S."/>
            <person name="Milne S."/>
            <person name="Mistry S."/>
            <person name="Moore M.J.F."/>
            <person name="Nickerson T."/>
            <person name="O'Dell C.N."/>
            <person name="Oliver K."/>
            <person name="Palmeiri A."/>
            <person name="Palmer S.A."/>
            <person name="Parker A."/>
            <person name="Patel D."/>
            <person name="Pearce A.V."/>
            <person name="Peck A.I."/>
            <person name="Pelan S."/>
            <person name="Phelps K."/>
            <person name="Phillimore B.J."/>
            <person name="Plumb R."/>
            <person name="Rajan J."/>
            <person name="Raymond C."/>
            <person name="Rouse G."/>
            <person name="Saenphimmachak C."/>
            <person name="Sehra H.K."/>
            <person name="Sheridan E."/>
            <person name="Shownkeen R."/>
            <person name="Sims S."/>
            <person name="Skuce C.D."/>
            <person name="Smith M."/>
            <person name="Steward C."/>
            <person name="Subramanian S."/>
            <person name="Sycamore N."/>
            <person name="Tracey A."/>
            <person name="Tromans A."/>
            <person name="Van Helmond Z."/>
            <person name="Wall M."/>
            <person name="Wallis J.M."/>
            <person name="White S."/>
            <person name="Whitehead S.L."/>
            <person name="Wilkinson J.E."/>
            <person name="Willey D.L."/>
            <person name="Williams H."/>
            <person name="Wilming L."/>
            <person name="Wray P.W."/>
            <person name="Wu Z."/>
            <person name="Coulson A."/>
            <person name="Vaudin M."/>
            <person name="Sulston J.E."/>
            <person name="Durbin R.M."/>
            <person name="Hubbard T."/>
            <person name="Wooster R."/>
            <person name="Dunham I."/>
            <person name="Carter N.P."/>
            <person name="McVean G."/>
            <person name="Ross M.T."/>
            <person name="Harrow J."/>
            <person name="Olson M.V."/>
            <person name="Beck S."/>
            <person name="Rogers J."/>
            <person name="Bentley D.R."/>
        </authorList>
    </citation>
    <scope>NUCLEOTIDE SEQUENCE [LARGE SCALE GENOMIC DNA]</scope>
</reference>
<reference key="5">
    <citation type="submission" date="2005-07" db="EMBL/GenBank/DDBJ databases">
        <authorList>
            <person name="Mural R.J."/>
            <person name="Istrail S."/>
            <person name="Sutton G.G."/>
            <person name="Florea L."/>
            <person name="Halpern A.L."/>
            <person name="Mobarry C.M."/>
            <person name="Lippert R."/>
            <person name="Walenz B."/>
            <person name="Shatkay H."/>
            <person name="Dew I."/>
            <person name="Miller J.R."/>
            <person name="Flanigan M.J."/>
            <person name="Edwards N.J."/>
            <person name="Bolanos R."/>
            <person name="Fasulo D."/>
            <person name="Halldorsson B.V."/>
            <person name="Hannenhalli S."/>
            <person name="Turner R."/>
            <person name="Yooseph S."/>
            <person name="Lu F."/>
            <person name="Nusskern D.R."/>
            <person name="Shue B.C."/>
            <person name="Zheng X.H."/>
            <person name="Zhong F."/>
            <person name="Delcher A.L."/>
            <person name="Huson D.H."/>
            <person name="Kravitz S.A."/>
            <person name="Mouchard L."/>
            <person name="Reinert K."/>
            <person name="Remington K.A."/>
            <person name="Clark A.G."/>
            <person name="Waterman M.S."/>
            <person name="Eichler E.E."/>
            <person name="Adams M.D."/>
            <person name="Hunkapiller M.W."/>
            <person name="Myers E.W."/>
            <person name="Venter J.C."/>
        </authorList>
    </citation>
    <scope>NUCLEOTIDE SEQUENCE [LARGE SCALE GENOMIC DNA]</scope>
</reference>
<reference key="6">
    <citation type="journal article" date="2004" name="Genome Res.">
        <title>The status, quality, and expansion of the NIH full-length cDNA project: the Mammalian Gene Collection (MGC).</title>
        <authorList>
            <consortium name="The MGC Project Team"/>
        </authorList>
    </citation>
    <scope>NUCLEOTIDE SEQUENCE [LARGE SCALE MRNA] (ISOFORMS 3 AND 4)</scope>
    <source>
        <tissue>Brain</tissue>
        <tissue>Testis</tissue>
    </source>
</reference>
<reference key="7">
    <citation type="submission" date="2008-02" db="UniProtKB">
        <authorList>
            <person name="Bienvenut W.V."/>
            <person name="Calvo F."/>
            <person name="Kolch W."/>
        </authorList>
    </citation>
    <scope>PROTEIN SEQUENCE OF 132-146; 176-184; 275-282; 284-291; 294-302 AND 312-329</scope>
    <scope>IDENTIFICATION BY MASS SPECTROMETRY</scope>
    <source>
        <tissue>Cervix carcinoma</tissue>
    </source>
</reference>
<reference key="8">
    <citation type="journal article" date="2006" name="Cell">
        <title>Global, in vivo, and site-specific phosphorylation dynamics in signaling networks.</title>
        <authorList>
            <person name="Olsen J.V."/>
            <person name="Blagoev B."/>
            <person name="Gnad F."/>
            <person name="Macek B."/>
            <person name="Kumar C."/>
            <person name="Mortensen P."/>
            <person name="Mann M."/>
        </authorList>
    </citation>
    <scope>IDENTIFICATION BY MASS SPECTROMETRY [LARGE SCALE ANALYSIS]</scope>
    <source>
        <tissue>Cervix carcinoma</tissue>
    </source>
</reference>
<reference key="9">
    <citation type="journal article" date="2007" name="Science">
        <title>ATM and ATR substrate analysis reveals extensive protein networks responsive to DNA damage.</title>
        <authorList>
            <person name="Matsuoka S."/>
            <person name="Ballif B.A."/>
            <person name="Smogorzewska A."/>
            <person name="McDonald E.R. III"/>
            <person name="Hurov K.E."/>
            <person name="Luo J."/>
            <person name="Bakalarski C.E."/>
            <person name="Zhao Z."/>
            <person name="Solimini N."/>
            <person name="Lerenthal Y."/>
            <person name="Shiloh Y."/>
            <person name="Gygi S.P."/>
            <person name="Elledge S.J."/>
        </authorList>
    </citation>
    <scope>PHOSPHORYLATION [LARGE SCALE ANALYSIS] AT SER-142</scope>
    <scope>IDENTIFICATION BY MASS SPECTROMETRY [LARGE SCALE ANALYSIS]</scope>
    <source>
        <tissue>Embryonic kidney</tissue>
    </source>
</reference>
<reference key="10">
    <citation type="journal article" date="2008" name="J. Proteome Res.">
        <title>Phosphorylation analysis of primary human T lymphocytes using sequential IMAC and titanium oxide enrichment.</title>
        <authorList>
            <person name="Carrascal M."/>
            <person name="Ovelleiro D."/>
            <person name="Casas V."/>
            <person name="Gay M."/>
            <person name="Abian J."/>
        </authorList>
    </citation>
    <scope>IDENTIFICATION BY MASS SPECTROMETRY [LARGE SCALE ANALYSIS]</scope>
    <source>
        <tissue>T-cell</tissue>
    </source>
</reference>
<reference key="11">
    <citation type="journal article" date="2008" name="Proc. Natl. Acad. Sci. U.S.A.">
        <title>A quantitative atlas of mitotic phosphorylation.</title>
        <authorList>
            <person name="Dephoure N."/>
            <person name="Zhou C."/>
            <person name="Villen J."/>
            <person name="Beausoleil S.A."/>
            <person name="Bakalarski C.E."/>
            <person name="Elledge S.J."/>
            <person name="Gygi S.P."/>
        </authorList>
    </citation>
    <scope>PHOSPHORYLATION [LARGE SCALE ANALYSIS] AT SER-248 AND SER-249</scope>
    <scope>IDENTIFICATION BY MASS SPECTROMETRY [LARGE SCALE ANALYSIS]</scope>
    <source>
        <tissue>Cervix carcinoma</tissue>
    </source>
</reference>
<reference key="12">
    <citation type="journal article" date="2009" name="Sci. Signal.">
        <title>Quantitative phosphoproteomic analysis of T cell receptor signaling reveals system-wide modulation of protein-protein interactions.</title>
        <authorList>
            <person name="Mayya V."/>
            <person name="Lundgren D.H."/>
            <person name="Hwang S.-I."/>
            <person name="Rezaul K."/>
            <person name="Wu L."/>
            <person name="Eng J.K."/>
            <person name="Rodionov V."/>
            <person name="Han D.K."/>
        </authorList>
    </citation>
    <scope>IDENTIFICATION BY MASS SPECTROMETRY [LARGE SCALE ANALYSIS]</scope>
    <source>
        <tissue>Leukemic T-cell</tissue>
    </source>
</reference>
<reference key="13">
    <citation type="journal article" date="2010" name="J. Biol. Chem.">
        <title>The middle region of an HP1-binding protein, HP1-BP74, associates with linker DNA at the entry/exit site of nucleosomal DNA.</title>
        <authorList>
            <person name="Hayashihara K."/>
            <person name="Uchiyama S."/>
            <person name="Shimamoto S."/>
            <person name="Kobayashi S."/>
            <person name="Tomschik M."/>
            <person name="Wakamatsu H."/>
            <person name="No D."/>
            <person name="Sugahara H."/>
            <person name="Hori N."/>
            <person name="Noda M."/>
            <person name="Ohkubo T."/>
            <person name="Zlatanova J."/>
            <person name="Matsunaga S."/>
            <person name="Fukui K."/>
        </authorList>
    </citation>
    <scope>INTERACTION WITH CBX5</scope>
    <scope>DOMAIN</scope>
    <scope>SUBCELLULAR LOCATION</scope>
    <scope>STRUCTURE BY NMR OF 153-237</scope>
</reference>
<reference key="14">
    <citation type="journal article" date="2010" name="Sci. Signal.">
        <title>Quantitative phosphoproteomics reveals widespread full phosphorylation site occupancy during mitosis.</title>
        <authorList>
            <person name="Olsen J.V."/>
            <person name="Vermeulen M."/>
            <person name="Santamaria A."/>
            <person name="Kumar C."/>
            <person name="Miller M.L."/>
            <person name="Jensen L.J."/>
            <person name="Gnad F."/>
            <person name="Cox J."/>
            <person name="Jensen T.S."/>
            <person name="Nigg E.A."/>
            <person name="Brunak S."/>
            <person name="Mann M."/>
        </authorList>
    </citation>
    <scope>ACETYLATION [LARGE SCALE ANALYSIS] AT ALA-2</scope>
    <scope>PHOSPHORYLATION [LARGE SCALE ANALYSIS] AT SER-6; SER-142; SER-155; SER-156; SER-248 AND SER-249</scope>
    <scope>CLEAVAGE OF INITIATOR METHIONINE [LARGE SCALE ANALYSIS]</scope>
    <scope>IDENTIFICATION BY MASS SPECTROMETRY [LARGE SCALE ANALYSIS]</scope>
    <source>
        <tissue>Cervix carcinoma</tissue>
    </source>
</reference>
<reference key="15">
    <citation type="journal article" date="2011" name="BMC Syst. Biol.">
        <title>Initial characterization of the human central proteome.</title>
        <authorList>
            <person name="Burkard T.R."/>
            <person name="Planyavsky M."/>
            <person name="Kaupe I."/>
            <person name="Breitwieser F.P."/>
            <person name="Buerckstuemmer T."/>
            <person name="Bennett K.L."/>
            <person name="Superti-Furga G."/>
            <person name="Colinge J."/>
        </authorList>
    </citation>
    <scope>IDENTIFICATION BY MASS SPECTROMETRY [LARGE SCALE ANALYSIS]</scope>
</reference>
<reference key="16">
    <citation type="journal article" date="2011" name="Sci. Signal.">
        <title>System-wide temporal characterization of the proteome and phosphoproteome of human embryonic stem cell differentiation.</title>
        <authorList>
            <person name="Rigbolt K.T."/>
            <person name="Prokhorova T.A."/>
            <person name="Akimov V."/>
            <person name="Henningsen J."/>
            <person name="Johansen P.T."/>
            <person name="Kratchmarova I."/>
            <person name="Kassem M."/>
            <person name="Mann M."/>
            <person name="Olsen J.V."/>
            <person name="Blagoev B."/>
        </authorList>
    </citation>
    <scope>PHOSPHORYLATION [LARGE SCALE ANALYSIS] AT SER-441; SER-442 AND SER-446</scope>
    <scope>IDENTIFICATION BY MASS SPECTROMETRY [LARGE SCALE ANALYSIS]</scope>
</reference>
<reference key="17">
    <citation type="journal article" date="2013" name="J. Proteome Res.">
        <title>Toward a comprehensive characterization of a human cancer cell phosphoproteome.</title>
        <authorList>
            <person name="Zhou H."/>
            <person name="Di Palma S."/>
            <person name="Preisinger C."/>
            <person name="Peng M."/>
            <person name="Polat A.N."/>
            <person name="Heck A.J."/>
            <person name="Mohammed S."/>
        </authorList>
    </citation>
    <scope>PHOSPHORYLATION [LARGE SCALE ANALYSIS] AT SER-6; THR-51; SER-155 AND SER-249</scope>
    <scope>IDENTIFICATION BY MASS SPECTROMETRY [LARGE SCALE ANALYSIS]</scope>
    <source>
        <tissue>Cervix carcinoma</tissue>
        <tissue>Erythroleukemia</tissue>
    </source>
</reference>
<reference key="18">
    <citation type="journal article" date="2014" name="J. Proteomics">
        <title>An enzyme assisted RP-RPLC approach for in-depth analysis of human liver phosphoproteome.</title>
        <authorList>
            <person name="Bian Y."/>
            <person name="Song C."/>
            <person name="Cheng K."/>
            <person name="Dong M."/>
            <person name="Wang F."/>
            <person name="Huang J."/>
            <person name="Sun D."/>
            <person name="Wang L."/>
            <person name="Ye M."/>
            <person name="Zou H."/>
        </authorList>
    </citation>
    <scope>IDENTIFICATION BY MASS SPECTROMETRY [LARGE SCALE ANALYSIS]</scope>
    <source>
        <tissue>Liver</tissue>
    </source>
</reference>
<reference key="19">
    <citation type="journal article" date="2014" name="Mol. Cell. Proteomics">
        <title>Profiling of the chromatin-associated proteome identifies HP1BP3 as a novel regulator of cell cycle progression.</title>
        <authorList>
            <person name="Dutta B."/>
            <person name="Ren Y."/>
            <person name="Hao P."/>
            <person name="Sim K.H."/>
            <person name="Cheow E."/>
            <person name="Adav S."/>
            <person name="Tam J.P."/>
            <person name="Sze S.K."/>
        </authorList>
    </citation>
    <scope>IDENTIFICATION BY MASS SPECTROMETRY</scope>
    <scope>SUBCELLULAR LOCATION</scope>
    <scope>FUNCTION</scope>
</reference>
<reference key="20">
    <citation type="journal article" date="2014" name="Mol. Cell. Proteomics">
        <title>Quantitative profiling of chromatome dynamics reveals a novel role for HP1BP3 in hypoxia-induced oncogenesis.</title>
        <authorList>
            <person name="Dutta B."/>
            <person name="Ren Y."/>
            <person name="Lim S.K."/>
            <person name="Tam J.P."/>
            <person name="Sze S.K."/>
        </authorList>
    </citation>
    <scope>IDENTIFICATION BY MASS SPECTROMETRY</scope>
    <scope>FUNCTION</scope>
</reference>
<reference key="21">
    <citation type="journal article" date="2017" name="Nat. Struct. Mol. Biol.">
        <title>Site-specific mapping of the human SUMO proteome reveals co-modification with phosphorylation.</title>
        <authorList>
            <person name="Hendriks I.A."/>
            <person name="Lyon D."/>
            <person name="Young C."/>
            <person name="Jensen L.J."/>
            <person name="Vertegaal A.C."/>
            <person name="Nielsen M.L."/>
        </authorList>
    </citation>
    <scope>SUMOYLATION [LARGE SCALE ANALYSIS] AT LYS-64; LYS-97 AND LYS-258</scope>
    <scope>IDENTIFICATION BY MASS SPECTROMETRY [LARGE SCALE ANALYSIS]</scope>
</reference>
<comment type="function">
    <text evidence="6 7">Component of heterochromatin that maintains heterochromatin integrity during G1/S progression and regulates the duration of G1 phase to critically influence cell proliferative capacity (PubMed:24830416). Mediates chromatin condensation during hypoxia, leading to increased tumor cell viability, radio-resistance, chemo-resistance and self-renewal (PubMed:25100860).</text>
</comment>
<comment type="subunit">
    <text evidence="5">Interacts (via PxVxL motif) with CBX5 (via Trp-174).</text>
</comment>
<comment type="interaction">
    <interactant intactId="EBI-2880687">
        <id>Q5SSJ5</id>
    </interactant>
    <interactant intactId="EBI-358971">
        <id>P04908</id>
        <label>H2AC8</label>
    </interactant>
    <organismsDiffer>false</organismsDiffer>
    <experiments>2</experiments>
</comment>
<comment type="interaction">
    <interactant intactId="EBI-2880687">
        <id>Q5SSJ5</id>
    </interactant>
    <interactant intactId="EBI-748397">
        <id>P50222</id>
        <label>MEOX2</label>
    </interactant>
    <organismsDiffer>false</organismsDiffer>
    <experiments>3</experiments>
</comment>
<comment type="subcellular location">
    <subcellularLocation>
        <location evidence="6">Nucleus</location>
    </subcellularLocation>
    <subcellularLocation>
        <location evidence="5 6">Chromosome</location>
    </subcellularLocation>
    <text evidence="6">localized in nuclei but not in nucleoli in interphase. Colocalized with chromosomes in mitosis, with a gradually increased during G1 progression and a maximum level during late G1 phase (G1/S).</text>
</comment>
<comment type="alternative products">
    <event type="alternative splicing"/>
    <isoform>
        <id>Q5SSJ5-1</id>
        <name>1</name>
        <sequence type="displayed"/>
    </isoform>
    <isoform>
        <id>Q5SSJ5-2</id>
        <name>2</name>
        <sequence type="described" ref="VSP_034169"/>
    </isoform>
    <isoform>
        <id>Q5SSJ5-3</id>
        <name>3</name>
        <sequence type="described" ref="VSP_034168"/>
    </isoform>
    <isoform>
        <id>Q5SSJ5-5</id>
        <name>4</name>
        <sequence type="described" ref="VSP_034170 VSP_034171"/>
    </isoform>
</comment>
<comment type="domain">
    <text evidence="5">A central region that included the first H15 (linker histone H1/H5 globular) domain binds at the entry/exit site of the nucleosomal DNA.</text>
</comment>
<comment type="sequence caution" evidence="12">
    <conflict type="frameshift">
        <sequence resource="EMBL-CDS" id="AAF14871"/>
    </conflict>
</comment>
<accession>Q5SSJ5</accession>
<accession>A6NI71</accession>
<accession>A8K5D7</accession>
<accession>B3KMZ8</accession>
<accession>B4E210</accession>
<accession>Q05BI0</accession>
<accession>Q5SSJ6</accession>
<accession>Q5SWC6</accession>
<accession>Q6PIM9</accession>
<accession>Q8NDF0</accession>
<accession>Q9UHY0</accession>
<gene>
    <name type="primary">HP1BP3</name>
</gene>
<protein>
    <recommendedName>
        <fullName>Heterochromatin protein 1-binding protein 3</fullName>
    </recommendedName>
    <alternativeName>
        <fullName evidence="11">Protein HP1-BP74</fullName>
    </alternativeName>
</protein>
<organism>
    <name type="scientific">Homo sapiens</name>
    <name type="common">Human</name>
    <dbReference type="NCBI Taxonomy" id="9606"/>
    <lineage>
        <taxon>Eukaryota</taxon>
        <taxon>Metazoa</taxon>
        <taxon>Chordata</taxon>
        <taxon>Craniata</taxon>
        <taxon>Vertebrata</taxon>
        <taxon>Euteleostomi</taxon>
        <taxon>Mammalia</taxon>
        <taxon>Eutheria</taxon>
        <taxon>Euarchontoglires</taxon>
        <taxon>Primates</taxon>
        <taxon>Haplorrhini</taxon>
        <taxon>Catarrhini</taxon>
        <taxon>Hominidae</taxon>
        <taxon>Homo</taxon>
    </lineage>
</organism>
<proteinExistence type="evidence at protein level"/>
<sequence>MATDTSQGELVHPKALPLIVGAQLIHADKLGEKVEDSTMPIRRTVNSTRETPPKSKLAEGEEEKPEPDISSEESVSTVEEQENETPPATSSEAEQPKGEPENEEKEENKSSEETKKDEKDQSKEKEKKVKKTIPSWATLSASQLARAQKQTPMASSPRPKMDAILTEAIKACFQKSGASVVAIRKYIIHKYPSLELERRGYLLKQALKRELNRGVIKQVKGKGASGSFVVVQKSRKTPQKSRNRKNRSSAVDPEPQVKLEDVLPLAFTRLCEPKEASYSLIRKYVSQYYPKLRVDIRPQLLKNALQRAVERGQLEQITGKGASGTFQLKKSGEKPLLGGSLMEYAILSAIAAMNEPKTCSTTALKKYVLENHPGTNSNYQMHLLKKTLQKCEKNGWMEQISGKGFSGTFQLCFPYYPSPGVLFPKKEPDDSRDEDEDEDESSEEDSEDEEPPPKRRLQKKTPAKSPGKAASVKQRGSKPAPKVSAAQRGKARPLPKKAPPKAKTPAKKTRPSSTVIKKPSGGSSKKPATSARKEVKLPGKGKSTMKKSFRVKK</sequence>